<proteinExistence type="inferred from homology"/>
<comment type="function">
    <text evidence="1">Cell wall formation.</text>
</comment>
<comment type="catalytic activity">
    <reaction evidence="1">
        <text>UDP-N-acetyl-alpha-D-muramate + NADP(+) = UDP-N-acetyl-3-O-(1-carboxyvinyl)-alpha-D-glucosamine + NADPH + H(+)</text>
        <dbReference type="Rhea" id="RHEA:12248"/>
        <dbReference type="ChEBI" id="CHEBI:15378"/>
        <dbReference type="ChEBI" id="CHEBI:57783"/>
        <dbReference type="ChEBI" id="CHEBI:58349"/>
        <dbReference type="ChEBI" id="CHEBI:68483"/>
        <dbReference type="ChEBI" id="CHEBI:70757"/>
        <dbReference type="EC" id="1.3.1.98"/>
    </reaction>
</comment>
<comment type="cofactor">
    <cofactor evidence="1">
        <name>FAD</name>
        <dbReference type="ChEBI" id="CHEBI:57692"/>
    </cofactor>
</comment>
<comment type="pathway">
    <text evidence="1">Cell wall biogenesis; peptidoglycan biosynthesis.</text>
</comment>
<comment type="subcellular location">
    <subcellularLocation>
        <location evidence="1">Cytoplasm</location>
    </subcellularLocation>
</comment>
<comment type="similarity">
    <text evidence="1">Belongs to the MurB family.</text>
</comment>
<protein>
    <recommendedName>
        <fullName evidence="1">UDP-N-acetylenolpyruvoylglucosamine reductase</fullName>
        <ecNumber evidence="1">1.3.1.98</ecNumber>
    </recommendedName>
    <alternativeName>
        <fullName evidence="1">UDP-N-acetylmuramate dehydrogenase</fullName>
    </alternativeName>
</protein>
<name>MURB_IDILO</name>
<evidence type="ECO:0000255" key="1">
    <source>
        <dbReference type="HAMAP-Rule" id="MF_00037"/>
    </source>
</evidence>
<reference key="1">
    <citation type="journal article" date="2004" name="Proc. Natl. Acad. Sci. U.S.A.">
        <title>Genome sequence of the deep-sea gamma-proteobacterium Idiomarina loihiensis reveals amino acid fermentation as a source of carbon and energy.</title>
        <authorList>
            <person name="Hou S."/>
            <person name="Saw J.H."/>
            <person name="Lee K.S."/>
            <person name="Freitas T.A."/>
            <person name="Belisle C."/>
            <person name="Kawarabayasi Y."/>
            <person name="Donachie S.P."/>
            <person name="Pikina A."/>
            <person name="Galperin M.Y."/>
            <person name="Koonin E.V."/>
            <person name="Makarova K.S."/>
            <person name="Omelchenko M.V."/>
            <person name="Sorokin A."/>
            <person name="Wolf Y.I."/>
            <person name="Li Q.X."/>
            <person name="Keum Y.S."/>
            <person name="Campbell S."/>
            <person name="Denery J."/>
            <person name="Aizawa S."/>
            <person name="Shibata S."/>
            <person name="Malahoff A."/>
            <person name="Alam M."/>
        </authorList>
    </citation>
    <scope>NUCLEOTIDE SEQUENCE [LARGE SCALE GENOMIC DNA]</scope>
    <source>
        <strain>ATCC BAA-735 / DSM 15497 / L2-TR</strain>
    </source>
</reference>
<organism>
    <name type="scientific">Idiomarina loihiensis (strain ATCC BAA-735 / DSM 15497 / L2-TR)</name>
    <dbReference type="NCBI Taxonomy" id="283942"/>
    <lineage>
        <taxon>Bacteria</taxon>
        <taxon>Pseudomonadati</taxon>
        <taxon>Pseudomonadota</taxon>
        <taxon>Gammaproteobacteria</taxon>
        <taxon>Alteromonadales</taxon>
        <taxon>Idiomarinaceae</taxon>
        <taxon>Idiomarina</taxon>
    </lineage>
</organism>
<feature type="chain" id="PRO_0000224687" description="UDP-N-acetylenolpyruvoylglucosamine reductase">
    <location>
        <begin position="1"/>
        <end position="333"/>
    </location>
</feature>
<feature type="domain" description="FAD-binding PCMH-type" evidence="1">
    <location>
        <begin position="12"/>
        <end position="176"/>
    </location>
</feature>
<feature type="active site" evidence="1">
    <location>
        <position position="153"/>
    </location>
</feature>
<feature type="active site" description="Proton donor" evidence="1">
    <location>
        <position position="221"/>
    </location>
</feature>
<feature type="active site" evidence="1">
    <location>
        <position position="317"/>
    </location>
</feature>
<dbReference type="EC" id="1.3.1.98" evidence="1"/>
<dbReference type="EMBL" id="AE017340">
    <property type="protein sequence ID" value="AAV82836.1"/>
    <property type="molecule type" value="Genomic_DNA"/>
</dbReference>
<dbReference type="RefSeq" id="WP_011235232.1">
    <property type="nucleotide sequence ID" value="NC_006512.1"/>
</dbReference>
<dbReference type="SMR" id="Q5QY76"/>
<dbReference type="STRING" id="283942.IL2004"/>
<dbReference type="GeneID" id="41337194"/>
<dbReference type="KEGG" id="ilo:IL2004"/>
<dbReference type="eggNOG" id="COG0812">
    <property type="taxonomic scope" value="Bacteria"/>
</dbReference>
<dbReference type="HOGENOM" id="CLU_035304_0_0_6"/>
<dbReference type="OrthoDB" id="9804753at2"/>
<dbReference type="UniPathway" id="UPA00219"/>
<dbReference type="Proteomes" id="UP000001171">
    <property type="component" value="Chromosome"/>
</dbReference>
<dbReference type="GO" id="GO:0005829">
    <property type="term" value="C:cytosol"/>
    <property type="evidence" value="ECO:0007669"/>
    <property type="project" value="TreeGrafter"/>
</dbReference>
<dbReference type="GO" id="GO:0071949">
    <property type="term" value="F:FAD binding"/>
    <property type="evidence" value="ECO:0007669"/>
    <property type="project" value="InterPro"/>
</dbReference>
<dbReference type="GO" id="GO:0008762">
    <property type="term" value="F:UDP-N-acetylmuramate dehydrogenase activity"/>
    <property type="evidence" value="ECO:0007669"/>
    <property type="project" value="UniProtKB-UniRule"/>
</dbReference>
<dbReference type="GO" id="GO:0051301">
    <property type="term" value="P:cell division"/>
    <property type="evidence" value="ECO:0007669"/>
    <property type="project" value="UniProtKB-KW"/>
</dbReference>
<dbReference type="GO" id="GO:0071555">
    <property type="term" value="P:cell wall organization"/>
    <property type="evidence" value="ECO:0007669"/>
    <property type="project" value="UniProtKB-KW"/>
</dbReference>
<dbReference type="GO" id="GO:0009252">
    <property type="term" value="P:peptidoglycan biosynthetic process"/>
    <property type="evidence" value="ECO:0007669"/>
    <property type="project" value="UniProtKB-UniRule"/>
</dbReference>
<dbReference type="GO" id="GO:0008360">
    <property type="term" value="P:regulation of cell shape"/>
    <property type="evidence" value="ECO:0007669"/>
    <property type="project" value="UniProtKB-KW"/>
</dbReference>
<dbReference type="Gene3D" id="3.30.465.10">
    <property type="match status" value="1"/>
</dbReference>
<dbReference type="Gene3D" id="3.90.78.10">
    <property type="entry name" value="UDP-N-acetylenolpyruvoylglucosamine reductase, C-terminal domain"/>
    <property type="match status" value="1"/>
</dbReference>
<dbReference type="Gene3D" id="3.30.43.10">
    <property type="entry name" value="Uridine Diphospho-n-acetylenolpyruvylglucosamine Reductase, domain 2"/>
    <property type="match status" value="1"/>
</dbReference>
<dbReference type="HAMAP" id="MF_00037">
    <property type="entry name" value="MurB"/>
    <property type="match status" value="1"/>
</dbReference>
<dbReference type="InterPro" id="IPR016166">
    <property type="entry name" value="FAD-bd_PCMH"/>
</dbReference>
<dbReference type="InterPro" id="IPR036318">
    <property type="entry name" value="FAD-bd_PCMH-like_sf"/>
</dbReference>
<dbReference type="InterPro" id="IPR016167">
    <property type="entry name" value="FAD-bd_PCMH_sub1"/>
</dbReference>
<dbReference type="InterPro" id="IPR016169">
    <property type="entry name" value="FAD-bd_PCMH_sub2"/>
</dbReference>
<dbReference type="InterPro" id="IPR003170">
    <property type="entry name" value="MurB"/>
</dbReference>
<dbReference type="InterPro" id="IPR011601">
    <property type="entry name" value="MurB_C"/>
</dbReference>
<dbReference type="InterPro" id="IPR036635">
    <property type="entry name" value="MurB_C_sf"/>
</dbReference>
<dbReference type="InterPro" id="IPR006094">
    <property type="entry name" value="Oxid_FAD_bind_N"/>
</dbReference>
<dbReference type="NCBIfam" id="TIGR00179">
    <property type="entry name" value="murB"/>
    <property type="match status" value="1"/>
</dbReference>
<dbReference type="NCBIfam" id="NF000755">
    <property type="entry name" value="PRK00046.1"/>
    <property type="match status" value="1"/>
</dbReference>
<dbReference type="PANTHER" id="PTHR21071">
    <property type="entry name" value="UDP-N-ACETYLENOLPYRUVOYLGLUCOSAMINE REDUCTASE"/>
    <property type="match status" value="1"/>
</dbReference>
<dbReference type="PANTHER" id="PTHR21071:SF4">
    <property type="entry name" value="UDP-N-ACETYLENOLPYRUVOYLGLUCOSAMINE REDUCTASE"/>
    <property type="match status" value="1"/>
</dbReference>
<dbReference type="Pfam" id="PF01565">
    <property type="entry name" value="FAD_binding_4"/>
    <property type="match status" value="1"/>
</dbReference>
<dbReference type="Pfam" id="PF02873">
    <property type="entry name" value="MurB_C"/>
    <property type="match status" value="1"/>
</dbReference>
<dbReference type="SUPFAM" id="SSF56176">
    <property type="entry name" value="FAD-binding/transporter-associated domain-like"/>
    <property type="match status" value="1"/>
</dbReference>
<dbReference type="SUPFAM" id="SSF56194">
    <property type="entry name" value="Uridine diphospho-N-Acetylenolpyruvylglucosamine reductase, MurB, C-terminal domain"/>
    <property type="match status" value="1"/>
</dbReference>
<dbReference type="PROSITE" id="PS51387">
    <property type="entry name" value="FAD_PCMH"/>
    <property type="match status" value="1"/>
</dbReference>
<keyword id="KW-0131">Cell cycle</keyword>
<keyword id="KW-0132">Cell division</keyword>
<keyword id="KW-0133">Cell shape</keyword>
<keyword id="KW-0961">Cell wall biogenesis/degradation</keyword>
<keyword id="KW-0963">Cytoplasm</keyword>
<keyword id="KW-0274">FAD</keyword>
<keyword id="KW-0285">Flavoprotein</keyword>
<keyword id="KW-0521">NADP</keyword>
<keyword id="KW-0560">Oxidoreductase</keyword>
<keyword id="KW-0573">Peptidoglycan synthesis</keyword>
<keyword id="KW-1185">Reference proteome</keyword>
<gene>
    <name evidence="1" type="primary">murB</name>
    <name type="ordered locus">IL2004</name>
</gene>
<sequence>MIELAERHSFKLPAQCRALIELKSSDDVEQLAFEEPYYLLGEGSNTLFVDDFYGTVICNRLLGVCIEEQESSYLITAAAGENWHNFVADLRARSIDGLENLALVPGSVGAAPVQNVGAYGVEVSTFIEQVTAWDIKEKCWVSMNKEACQFAYRDSVFKQHPGRWLITSVVFRLPKDWQPVTHYAPLNQLQGHVSAQKIFDTVVEVRQKKLPDPKVIPNAGSFFKNPVINKAQLDGLLQKWPDMVYFPVADNHVKVAAGWLIEHLGLKSAFVGDAAVNPHQALVLINKAQATGSDITQLALKIMKQVADASGIMLEPEVRLVGQHGLVQLAVEK</sequence>
<accession>Q5QY76</accession>